<proteinExistence type="inferred from homology"/>
<organism>
    <name type="scientific">Salmonella paratyphi A (strain AKU_12601)</name>
    <dbReference type="NCBI Taxonomy" id="554290"/>
    <lineage>
        <taxon>Bacteria</taxon>
        <taxon>Pseudomonadati</taxon>
        <taxon>Pseudomonadota</taxon>
        <taxon>Gammaproteobacteria</taxon>
        <taxon>Enterobacterales</taxon>
        <taxon>Enterobacteriaceae</taxon>
        <taxon>Salmonella</taxon>
    </lineage>
</organism>
<dbReference type="EC" id="2.7.2.11" evidence="1"/>
<dbReference type="EMBL" id="FM200053">
    <property type="protein sequence ID" value="CAR60495.1"/>
    <property type="molecule type" value="Genomic_DNA"/>
</dbReference>
<dbReference type="RefSeq" id="WP_001285277.1">
    <property type="nucleotide sequence ID" value="NC_011147.1"/>
</dbReference>
<dbReference type="SMR" id="B5BDP8"/>
<dbReference type="KEGG" id="sek:SSPA2271"/>
<dbReference type="HOGENOM" id="CLU_025400_2_0_6"/>
<dbReference type="UniPathway" id="UPA00098">
    <property type="reaction ID" value="UER00359"/>
</dbReference>
<dbReference type="Proteomes" id="UP000001869">
    <property type="component" value="Chromosome"/>
</dbReference>
<dbReference type="GO" id="GO:0005829">
    <property type="term" value="C:cytosol"/>
    <property type="evidence" value="ECO:0007669"/>
    <property type="project" value="TreeGrafter"/>
</dbReference>
<dbReference type="GO" id="GO:0005524">
    <property type="term" value="F:ATP binding"/>
    <property type="evidence" value="ECO:0007669"/>
    <property type="project" value="UniProtKB-KW"/>
</dbReference>
<dbReference type="GO" id="GO:0004349">
    <property type="term" value="F:glutamate 5-kinase activity"/>
    <property type="evidence" value="ECO:0007669"/>
    <property type="project" value="UniProtKB-UniRule"/>
</dbReference>
<dbReference type="GO" id="GO:0003723">
    <property type="term" value="F:RNA binding"/>
    <property type="evidence" value="ECO:0007669"/>
    <property type="project" value="InterPro"/>
</dbReference>
<dbReference type="GO" id="GO:0055129">
    <property type="term" value="P:L-proline biosynthetic process"/>
    <property type="evidence" value="ECO:0007669"/>
    <property type="project" value="UniProtKB-UniRule"/>
</dbReference>
<dbReference type="CDD" id="cd04242">
    <property type="entry name" value="AAK_G5K_ProB"/>
    <property type="match status" value="1"/>
</dbReference>
<dbReference type="CDD" id="cd21157">
    <property type="entry name" value="PUA_G5K"/>
    <property type="match status" value="1"/>
</dbReference>
<dbReference type="FunFam" id="2.30.130.10:FF:000003">
    <property type="entry name" value="Glutamate 5-kinase"/>
    <property type="match status" value="1"/>
</dbReference>
<dbReference type="FunFam" id="3.40.1160.10:FF:000006">
    <property type="entry name" value="Glutamate 5-kinase"/>
    <property type="match status" value="1"/>
</dbReference>
<dbReference type="Gene3D" id="3.40.1160.10">
    <property type="entry name" value="Acetylglutamate kinase-like"/>
    <property type="match status" value="2"/>
</dbReference>
<dbReference type="Gene3D" id="2.30.130.10">
    <property type="entry name" value="PUA domain"/>
    <property type="match status" value="1"/>
</dbReference>
<dbReference type="HAMAP" id="MF_00456">
    <property type="entry name" value="ProB"/>
    <property type="match status" value="1"/>
</dbReference>
<dbReference type="InterPro" id="IPR036393">
    <property type="entry name" value="AceGlu_kinase-like_sf"/>
</dbReference>
<dbReference type="InterPro" id="IPR001048">
    <property type="entry name" value="Asp/Glu/Uridylate_kinase"/>
</dbReference>
<dbReference type="InterPro" id="IPR041739">
    <property type="entry name" value="G5K_ProB"/>
</dbReference>
<dbReference type="InterPro" id="IPR001057">
    <property type="entry name" value="Glu/AcGlu_kinase"/>
</dbReference>
<dbReference type="InterPro" id="IPR011529">
    <property type="entry name" value="Glu_5kinase"/>
</dbReference>
<dbReference type="InterPro" id="IPR005715">
    <property type="entry name" value="Glu_5kinase/COase_Synthase"/>
</dbReference>
<dbReference type="InterPro" id="IPR019797">
    <property type="entry name" value="Glutamate_5-kinase_CS"/>
</dbReference>
<dbReference type="InterPro" id="IPR002478">
    <property type="entry name" value="PUA"/>
</dbReference>
<dbReference type="InterPro" id="IPR015947">
    <property type="entry name" value="PUA-like_sf"/>
</dbReference>
<dbReference type="InterPro" id="IPR036974">
    <property type="entry name" value="PUA_sf"/>
</dbReference>
<dbReference type="NCBIfam" id="TIGR01027">
    <property type="entry name" value="proB"/>
    <property type="match status" value="1"/>
</dbReference>
<dbReference type="PANTHER" id="PTHR43654">
    <property type="entry name" value="GLUTAMATE 5-KINASE"/>
    <property type="match status" value="1"/>
</dbReference>
<dbReference type="PANTHER" id="PTHR43654:SF1">
    <property type="entry name" value="ISOPENTENYL PHOSPHATE KINASE"/>
    <property type="match status" value="1"/>
</dbReference>
<dbReference type="Pfam" id="PF00696">
    <property type="entry name" value="AA_kinase"/>
    <property type="match status" value="1"/>
</dbReference>
<dbReference type="Pfam" id="PF01472">
    <property type="entry name" value="PUA"/>
    <property type="match status" value="1"/>
</dbReference>
<dbReference type="PIRSF" id="PIRSF000729">
    <property type="entry name" value="GK"/>
    <property type="match status" value="1"/>
</dbReference>
<dbReference type="PRINTS" id="PR00474">
    <property type="entry name" value="GLU5KINASE"/>
</dbReference>
<dbReference type="SMART" id="SM00359">
    <property type="entry name" value="PUA"/>
    <property type="match status" value="1"/>
</dbReference>
<dbReference type="SUPFAM" id="SSF53633">
    <property type="entry name" value="Carbamate kinase-like"/>
    <property type="match status" value="1"/>
</dbReference>
<dbReference type="SUPFAM" id="SSF88697">
    <property type="entry name" value="PUA domain-like"/>
    <property type="match status" value="1"/>
</dbReference>
<dbReference type="PROSITE" id="PS00902">
    <property type="entry name" value="GLUTAMATE_5_KINASE"/>
    <property type="match status" value="1"/>
</dbReference>
<dbReference type="PROSITE" id="PS50890">
    <property type="entry name" value="PUA"/>
    <property type="match status" value="1"/>
</dbReference>
<protein>
    <recommendedName>
        <fullName evidence="1">Glutamate 5-kinase</fullName>
        <ecNumber evidence="1">2.7.2.11</ecNumber>
    </recommendedName>
    <alternativeName>
        <fullName evidence="1">Gamma-glutamyl kinase</fullName>
        <shortName evidence="1">GK</shortName>
    </alternativeName>
</protein>
<gene>
    <name evidence="1" type="primary">proB</name>
    <name type="ordered locus">SSPA2271</name>
</gene>
<evidence type="ECO:0000255" key="1">
    <source>
        <dbReference type="HAMAP-Rule" id="MF_00456"/>
    </source>
</evidence>
<keyword id="KW-0028">Amino-acid biosynthesis</keyword>
<keyword id="KW-0067">ATP-binding</keyword>
<keyword id="KW-0963">Cytoplasm</keyword>
<keyword id="KW-0418">Kinase</keyword>
<keyword id="KW-0547">Nucleotide-binding</keyword>
<keyword id="KW-0641">Proline biosynthesis</keyword>
<keyword id="KW-0808">Transferase</keyword>
<accession>B5BDP8</accession>
<comment type="function">
    <text evidence="1">Catalyzes the transfer of a phosphate group to glutamate to form L-glutamate 5-phosphate.</text>
</comment>
<comment type="catalytic activity">
    <reaction evidence="1">
        <text>L-glutamate + ATP = L-glutamyl 5-phosphate + ADP</text>
        <dbReference type="Rhea" id="RHEA:14877"/>
        <dbReference type="ChEBI" id="CHEBI:29985"/>
        <dbReference type="ChEBI" id="CHEBI:30616"/>
        <dbReference type="ChEBI" id="CHEBI:58274"/>
        <dbReference type="ChEBI" id="CHEBI:456216"/>
        <dbReference type="EC" id="2.7.2.11"/>
    </reaction>
</comment>
<comment type="pathway">
    <text evidence="1">Amino-acid biosynthesis; L-proline biosynthesis; L-glutamate 5-semialdehyde from L-glutamate: step 1/2.</text>
</comment>
<comment type="subcellular location">
    <subcellularLocation>
        <location evidence="1">Cytoplasm</location>
    </subcellularLocation>
</comment>
<comment type="similarity">
    <text evidence="1">Belongs to the glutamate 5-kinase family.</text>
</comment>
<feature type="chain" id="PRO_1000125261" description="Glutamate 5-kinase">
    <location>
        <begin position="1"/>
        <end position="367"/>
    </location>
</feature>
<feature type="domain" description="PUA" evidence="1">
    <location>
        <begin position="275"/>
        <end position="353"/>
    </location>
</feature>
<feature type="binding site" evidence="1">
    <location>
        <position position="10"/>
    </location>
    <ligand>
        <name>ATP</name>
        <dbReference type="ChEBI" id="CHEBI:30616"/>
    </ligand>
</feature>
<feature type="binding site" evidence="1">
    <location>
        <position position="50"/>
    </location>
    <ligand>
        <name>substrate</name>
    </ligand>
</feature>
<feature type="binding site" evidence="1">
    <location>
        <position position="137"/>
    </location>
    <ligand>
        <name>substrate</name>
    </ligand>
</feature>
<feature type="binding site" evidence="1">
    <location>
        <position position="149"/>
    </location>
    <ligand>
        <name>substrate</name>
    </ligand>
</feature>
<feature type="binding site" evidence="1">
    <location>
        <begin position="169"/>
        <end position="170"/>
    </location>
    <ligand>
        <name>ATP</name>
        <dbReference type="ChEBI" id="CHEBI:30616"/>
    </ligand>
</feature>
<feature type="binding site" evidence="1">
    <location>
        <begin position="211"/>
        <end position="217"/>
    </location>
    <ligand>
        <name>ATP</name>
        <dbReference type="ChEBI" id="CHEBI:30616"/>
    </ligand>
</feature>
<reference key="1">
    <citation type="journal article" date="2009" name="BMC Genomics">
        <title>Pseudogene accumulation in the evolutionary histories of Salmonella enterica serovars Paratyphi A and Typhi.</title>
        <authorList>
            <person name="Holt K.E."/>
            <person name="Thomson N.R."/>
            <person name="Wain J."/>
            <person name="Langridge G.C."/>
            <person name="Hasan R."/>
            <person name="Bhutta Z.A."/>
            <person name="Quail M.A."/>
            <person name="Norbertczak H."/>
            <person name="Walker D."/>
            <person name="Simmonds M."/>
            <person name="White B."/>
            <person name="Bason N."/>
            <person name="Mungall K."/>
            <person name="Dougan G."/>
            <person name="Parkhill J."/>
        </authorList>
    </citation>
    <scope>NUCLEOTIDE SEQUENCE [LARGE SCALE GENOMIC DNA]</scope>
    <source>
        <strain>AKU_12601</strain>
    </source>
</reference>
<sequence length="367" mass="39127">MSDSQTLVVKLGTSVLTGGSRRLNRAHIVELVRQCAQLHAAGHRIVIVTSGAIAAGREHLGYPELPATIASKQLLAAVGQSRLIQLWEQLFSIYGIHIGQMLLTRADMEDRERFLNARDTLRALLDNHIVPVINENDAVATAEIKVGDNDNLSALAAILAGADKLLLLTDQQGLFTADPRSNPQAELIKDVYGVDDALRSVAGDSVSGLGTGGMSTKLQAADVACRAGIDTIIASGSKPGVIGDVMEGISVGTRFHAQASPLENRKRWIFGAPPAGEITVDEGATAAMLERGSSLLPKGIKSVTGNFSRGEVIRICNLQGRDIAHGVSRYNSDALRRIAGHHSQQIDAILGYEYGPVAVHRDDMITR</sequence>
<name>PROB_SALPK</name>